<comment type="function">
    <text evidence="1">Allows the formation of correctly charged Asn-tRNA(Asn) or Gln-tRNA(Gln) through the transamidation of misacylated Asp-tRNA(Asn) or Glu-tRNA(Gln) in organisms which lack either or both of asparaginyl-tRNA or glutaminyl-tRNA synthetases. The reaction takes place in the presence of glutamine and ATP through an activated phospho-Asp-tRNA(Asn) or phospho-Glu-tRNA(Gln).</text>
</comment>
<comment type="catalytic activity">
    <reaction evidence="1">
        <text>L-glutamyl-tRNA(Gln) + L-glutamine + ATP + H2O = L-glutaminyl-tRNA(Gln) + L-glutamate + ADP + phosphate + H(+)</text>
        <dbReference type="Rhea" id="RHEA:17521"/>
        <dbReference type="Rhea" id="RHEA-COMP:9681"/>
        <dbReference type="Rhea" id="RHEA-COMP:9684"/>
        <dbReference type="ChEBI" id="CHEBI:15377"/>
        <dbReference type="ChEBI" id="CHEBI:15378"/>
        <dbReference type="ChEBI" id="CHEBI:29985"/>
        <dbReference type="ChEBI" id="CHEBI:30616"/>
        <dbReference type="ChEBI" id="CHEBI:43474"/>
        <dbReference type="ChEBI" id="CHEBI:58359"/>
        <dbReference type="ChEBI" id="CHEBI:78520"/>
        <dbReference type="ChEBI" id="CHEBI:78521"/>
        <dbReference type="ChEBI" id="CHEBI:456216"/>
    </reaction>
</comment>
<comment type="catalytic activity">
    <reaction evidence="1">
        <text>L-aspartyl-tRNA(Asn) + L-glutamine + ATP + H2O = L-asparaginyl-tRNA(Asn) + L-glutamate + ADP + phosphate + 2 H(+)</text>
        <dbReference type="Rhea" id="RHEA:14513"/>
        <dbReference type="Rhea" id="RHEA-COMP:9674"/>
        <dbReference type="Rhea" id="RHEA-COMP:9677"/>
        <dbReference type="ChEBI" id="CHEBI:15377"/>
        <dbReference type="ChEBI" id="CHEBI:15378"/>
        <dbReference type="ChEBI" id="CHEBI:29985"/>
        <dbReference type="ChEBI" id="CHEBI:30616"/>
        <dbReference type="ChEBI" id="CHEBI:43474"/>
        <dbReference type="ChEBI" id="CHEBI:58359"/>
        <dbReference type="ChEBI" id="CHEBI:78515"/>
        <dbReference type="ChEBI" id="CHEBI:78516"/>
        <dbReference type="ChEBI" id="CHEBI:456216"/>
    </reaction>
</comment>
<comment type="subunit">
    <text evidence="1">Heterotrimer of A, B and C subunits.</text>
</comment>
<comment type="similarity">
    <text evidence="1">Belongs to the GatB/GatE family. GatB subfamily.</text>
</comment>
<evidence type="ECO:0000255" key="1">
    <source>
        <dbReference type="HAMAP-Rule" id="MF_00121"/>
    </source>
</evidence>
<dbReference type="EC" id="6.3.5.-" evidence="1"/>
<dbReference type="EMBL" id="CP000087">
    <property type="protein sequence ID" value="ABE05216.1"/>
    <property type="molecule type" value="Genomic_DNA"/>
</dbReference>
<dbReference type="RefSeq" id="WP_011477794.1">
    <property type="nucleotide sequence ID" value="NC_007940.1"/>
</dbReference>
<dbReference type="SMR" id="Q1RHE8"/>
<dbReference type="KEGG" id="rbe:RBE_1135"/>
<dbReference type="eggNOG" id="COG0064">
    <property type="taxonomic scope" value="Bacteria"/>
</dbReference>
<dbReference type="HOGENOM" id="CLU_019240_0_0_5"/>
<dbReference type="OrthoDB" id="9804078at2"/>
<dbReference type="Proteomes" id="UP000001951">
    <property type="component" value="Chromosome"/>
</dbReference>
<dbReference type="GO" id="GO:0050566">
    <property type="term" value="F:asparaginyl-tRNA synthase (glutamine-hydrolyzing) activity"/>
    <property type="evidence" value="ECO:0007669"/>
    <property type="project" value="RHEA"/>
</dbReference>
<dbReference type="GO" id="GO:0005524">
    <property type="term" value="F:ATP binding"/>
    <property type="evidence" value="ECO:0007669"/>
    <property type="project" value="UniProtKB-KW"/>
</dbReference>
<dbReference type="GO" id="GO:0050567">
    <property type="term" value="F:glutaminyl-tRNA synthase (glutamine-hydrolyzing) activity"/>
    <property type="evidence" value="ECO:0007669"/>
    <property type="project" value="UniProtKB-UniRule"/>
</dbReference>
<dbReference type="GO" id="GO:0070681">
    <property type="term" value="P:glutaminyl-tRNAGln biosynthesis via transamidation"/>
    <property type="evidence" value="ECO:0007669"/>
    <property type="project" value="TreeGrafter"/>
</dbReference>
<dbReference type="GO" id="GO:0006412">
    <property type="term" value="P:translation"/>
    <property type="evidence" value="ECO:0007669"/>
    <property type="project" value="UniProtKB-UniRule"/>
</dbReference>
<dbReference type="FunFam" id="1.10.10.410:FF:000001">
    <property type="entry name" value="Aspartyl/glutamyl-tRNA(Asn/Gln) amidotransferase subunit B"/>
    <property type="match status" value="1"/>
</dbReference>
<dbReference type="Gene3D" id="1.10.10.410">
    <property type="match status" value="1"/>
</dbReference>
<dbReference type="Gene3D" id="1.10.150.380">
    <property type="entry name" value="GatB domain, N-terminal subdomain"/>
    <property type="match status" value="1"/>
</dbReference>
<dbReference type="HAMAP" id="MF_00121">
    <property type="entry name" value="GatB"/>
    <property type="match status" value="1"/>
</dbReference>
<dbReference type="InterPro" id="IPR017959">
    <property type="entry name" value="Asn/Gln-tRNA_amidoTrfase_suB/E"/>
</dbReference>
<dbReference type="InterPro" id="IPR006075">
    <property type="entry name" value="Asn/Gln-tRNA_Trfase_suB/E_cat"/>
</dbReference>
<dbReference type="InterPro" id="IPR018027">
    <property type="entry name" value="Asn/Gln_amidotransferase"/>
</dbReference>
<dbReference type="InterPro" id="IPR003789">
    <property type="entry name" value="Asn/Gln_tRNA_amidoTrase-B-like"/>
</dbReference>
<dbReference type="InterPro" id="IPR004413">
    <property type="entry name" value="GatB"/>
</dbReference>
<dbReference type="InterPro" id="IPR042114">
    <property type="entry name" value="GatB_C_1"/>
</dbReference>
<dbReference type="InterPro" id="IPR023168">
    <property type="entry name" value="GatB_Yqey_C_2"/>
</dbReference>
<dbReference type="InterPro" id="IPR017958">
    <property type="entry name" value="Gln-tRNA_amidoTrfase_suB_CS"/>
</dbReference>
<dbReference type="InterPro" id="IPR014746">
    <property type="entry name" value="Gln_synth/guanido_kin_cat_dom"/>
</dbReference>
<dbReference type="NCBIfam" id="TIGR00133">
    <property type="entry name" value="gatB"/>
    <property type="match status" value="1"/>
</dbReference>
<dbReference type="NCBIfam" id="NF004012">
    <property type="entry name" value="PRK05477.1-2"/>
    <property type="match status" value="1"/>
</dbReference>
<dbReference type="NCBIfam" id="NF004014">
    <property type="entry name" value="PRK05477.1-4"/>
    <property type="match status" value="1"/>
</dbReference>
<dbReference type="NCBIfam" id="NF004015">
    <property type="entry name" value="PRK05477.1-5"/>
    <property type="match status" value="1"/>
</dbReference>
<dbReference type="PANTHER" id="PTHR11659">
    <property type="entry name" value="GLUTAMYL-TRNA GLN AMIDOTRANSFERASE SUBUNIT B MITOCHONDRIAL AND PROKARYOTIC PET112-RELATED"/>
    <property type="match status" value="1"/>
</dbReference>
<dbReference type="PANTHER" id="PTHR11659:SF0">
    <property type="entry name" value="GLUTAMYL-TRNA(GLN) AMIDOTRANSFERASE SUBUNIT B, MITOCHONDRIAL"/>
    <property type="match status" value="1"/>
</dbReference>
<dbReference type="Pfam" id="PF02934">
    <property type="entry name" value="GatB_N"/>
    <property type="match status" value="1"/>
</dbReference>
<dbReference type="Pfam" id="PF02637">
    <property type="entry name" value="GatB_Yqey"/>
    <property type="match status" value="1"/>
</dbReference>
<dbReference type="SMART" id="SM00845">
    <property type="entry name" value="GatB_Yqey"/>
    <property type="match status" value="1"/>
</dbReference>
<dbReference type="SUPFAM" id="SSF89095">
    <property type="entry name" value="GatB/YqeY motif"/>
    <property type="match status" value="1"/>
</dbReference>
<dbReference type="SUPFAM" id="SSF55931">
    <property type="entry name" value="Glutamine synthetase/guanido kinase"/>
    <property type="match status" value="1"/>
</dbReference>
<dbReference type="PROSITE" id="PS01234">
    <property type="entry name" value="GATB"/>
    <property type="match status" value="1"/>
</dbReference>
<gene>
    <name evidence="1" type="primary">gatB</name>
    <name type="ordered locus">RBE_1135</name>
</gene>
<proteinExistence type="inferred from homology"/>
<protein>
    <recommendedName>
        <fullName evidence="1">Aspartyl/glutamyl-tRNA(Asn/Gln) amidotransferase subunit B</fullName>
        <shortName evidence="1">Asp/Glu-ADT subunit B</shortName>
        <ecNumber evidence="1">6.3.5.-</ecNumber>
    </recommendedName>
</protein>
<feature type="chain" id="PRO_0000241270" description="Aspartyl/glutamyl-tRNA(Asn/Gln) amidotransferase subunit B">
    <location>
        <begin position="1"/>
        <end position="483"/>
    </location>
</feature>
<reference key="1">
    <citation type="journal article" date="2006" name="PLoS Genet.">
        <title>Genome sequence of Rickettsia bellii illuminates the role of amoebae in gene exchanges between intracellular pathogens.</title>
        <authorList>
            <person name="Ogata H."/>
            <person name="La Scola B."/>
            <person name="Audic S."/>
            <person name="Renesto P."/>
            <person name="Blanc G."/>
            <person name="Robert C."/>
            <person name="Fournier P.-E."/>
            <person name="Claverie J.-M."/>
            <person name="Raoult D."/>
        </authorList>
    </citation>
    <scope>NUCLEOTIDE SEQUENCE [LARGE SCALE GENOMIC DNA]</scope>
    <source>
        <strain>RML369-C</strain>
    </source>
</reference>
<name>GATB_RICBR</name>
<keyword id="KW-0067">ATP-binding</keyword>
<keyword id="KW-0436">Ligase</keyword>
<keyword id="KW-0547">Nucleotide-binding</keyword>
<keyword id="KW-0648">Protein biosynthesis</keyword>
<sequence length="483" mass="53748">MAYIESNSGKWEYVIGLEIHAQISSKSKLFSGSGTTFAASPNSQVSYVDAAMPGMLPVLNEYCVHQAIKTGLGLKAKVNKYSVFDRKNYFYADLPQGYQISQFYYPIVQDGTMEIPTSTGELKTIRINRLHLEQDAGKSMHDQSPHYSFIDLNRAGIGLMEIVTEPDISSPDEAAEFVKKLRSLLRYVGSCDGDMEKGSMRCDANVSVRRKGEPLGTRCEIKNINSIRNIVRAIEFEAKRQVDLIENGESVIQETRLFNADSGETRTMRSKEEAADYRYFPDPDLLPVILSDELINELKASLPELPDQKIDKYITKFGLSKYDAEVIVADESAAKYFEEAANECDPKLLANWLINELFGQLNKASAEISECKITPNDFAKLIKLIEDNTISGKIAKTVFEIMFETGKAADKIVEEQGLVQVSDSNVLNTVIDEVIRENPDSVEGYKGGKDKLFGFFVGQVMKKTGGKANPGLVNQLLKEKLGS</sequence>
<organism>
    <name type="scientific">Rickettsia bellii (strain RML369-C)</name>
    <dbReference type="NCBI Taxonomy" id="336407"/>
    <lineage>
        <taxon>Bacteria</taxon>
        <taxon>Pseudomonadati</taxon>
        <taxon>Pseudomonadota</taxon>
        <taxon>Alphaproteobacteria</taxon>
        <taxon>Rickettsiales</taxon>
        <taxon>Rickettsiaceae</taxon>
        <taxon>Rickettsieae</taxon>
        <taxon>Rickettsia</taxon>
        <taxon>belli group</taxon>
    </lineage>
</organism>
<accession>Q1RHE8</accession>